<name>PDXY_PSEF5</name>
<evidence type="ECO:0000255" key="1">
    <source>
        <dbReference type="HAMAP-Rule" id="MF_01639"/>
    </source>
</evidence>
<dbReference type="EC" id="2.7.1.35" evidence="1"/>
<dbReference type="EMBL" id="CP000076">
    <property type="protein sequence ID" value="AAY95357.1"/>
    <property type="molecule type" value="Genomic_DNA"/>
</dbReference>
<dbReference type="RefSeq" id="WP_011064334.1">
    <property type="nucleotide sequence ID" value="NC_004129.6"/>
</dbReference>
<dbReference type="SMR" id="Q4K3F6"/>
<dbReference type="STRING" id="220664.PFL_6169"/>
<dbReference type="KEGG" id="pfl:PFL_6169"/>
<dbReference type="PATRIC" id="fig|220664.5.peg.6298"/>
<dbReference type="eggNOG" id="COG2240">
    <property type="taxonomic scope" value="Bacteria"/>
</dbReference>
<dbReference type="HOGENOM" id="CLU_046496_3_0_6"/>
<dbReference type="UniPathway" id="UPA01068">
    <property type="reaction ID" value="UER00298"/>
</dbReference>
<dbReference type="Proteomes" id="UP000008540">
    <property type="component" value="Chromosome"/>
</dbReference>
<dbReference type="GO" id="GO:0005829">
    <property type="term" value="C:cytosol"/>
    <property type="evidence" value="ECO:0007669"/>
    <property type="project" value="TreeGrafter"/>
</dbReference>
<dbReference type="GO" id="GO:0005524">
    <property type="term" value="F:ATP binding"/>
    <property type="evidence" value="ECO:0007669"/>
    <property type="project" value="UniProtKB-UniRule"/>
</dbReference>
<dbReference type="GO" id="GO:0000287">
    <property type="term" value="F:magnesium ion binding"/>
    <property type="evidence" value="ECO:0007669"/>
    <property type="project" value="UniProtKB-UniRule"/>
</dbReference>
<dbReference type="GO" id="GO:0008478">
    <property type="term" value="F:pyridoxal kinase activity"/>
    <property type="evidence" value="ECO:0007669"/>
    <property type="project" value="UniProtKB-UniRule"/>
</dbReference>
<dbReference type="GO" id="GO:0009443">
    <property type="term" value="P:pyridoxal 5'-phosphate salvage"/>
    <property type="evidence" value="ECO:0007669"/>
    <property type="project" value="UniProtKB-UniRule"/>
</dbReference>
<dbReference type="CDD" id="cd01173">
    <property type="entry name" value="pyridoxal_pyridoxamine_kinase"/>
    <property type="match status" value="1"/>
</dbReference>
<dbReference type="FunFam" id="3.40.1190.20:FF:000008">
    <property type="entry name" value="Pyridoxal kinase PdxY"/>
    <property type="match status" value="1"/>
</dbReference>
<dbReference type="Gene3D" id="3.40.1190.20">
    <property type="match status" value="1"/>
</dbReference>
<dbReference type="HAMAP" id="MF_01639">
    <property type="entry name" value="PdxY"/>
    <property type="match status" value="1"/>
</dbReference>
<dbReference type="InterPro" id="IPR013749">
    <property type="entry name" value="PM/HMP-P_kinase-1"/>
</dbReference>
<dbReference type="InterPro" id="IPR004625">
    <property type="entry name" value="PyrdxlKinase"/>
</dbReference>
<dbReference type="InterPro" id="IPR023685">
    <property type="entry name" value="Pyridoxal_kinase_PdxY"/>
</dbReference>
<dbReference type="InterPro" id="IPR029056">
    <property type="entry name" value="Ribokinase-like"/>
</dbReference>
<dbReference type="NCBIfam" id="NF004398">
    <property type="entry name" value="PRK05756.1"/>
    <property type="match status" value="1"/>
</dbReference>
<dbReference type="NCBIfam" id="TIGR00687">
    <property type="entry name" value="pyridox_kin"/>
    <property type="match status" value="1"/>
</dbReference>
<dbReference type="PANTHER" id="PTHR10534">
    <property type="entry name" value="PYRIDOXAL KINASE"/>
    <property type="match status" value="1"/>
</dbReference>
<dbReference type="PANTHER" id="PTHR10534:SF2">
    <property type="entry name" value="PYRIDOXAL KINASE"/>
    <property type="match status" value="1"/>
</dbReference>
<dbReference type="Pfam" id="PF08543">
    <property type="entry name" value="Phos_pyr_kin"/>
    <property type="match status" value="1"/>
</dbReference>
<dbReference type="SUPFAM" id="SSF53613">
    <property type="entry name" value="Ribokinase-like"/>
    <property type="match status" value="1"/>
</dbReference>
<keyword id="KW-0067">ATP-binding</keyword>
<keyword id="KW-0418">Kinase</keyword>
<keyword id="KW-0460">Magnesium</keyword>
<keyword id="KW-0547">Nucleotide-binding</keyword>
<keyword id="KW-0808">Transferase</keyword>
<protein>
    <recommendedName>
        <fullName evidence="1">Pyridoxal kinase PdxY</fullName>
        <shortName evidence="1">PL kinase</shortName>
        <ecNumber evidence="1">2.7.1.35</ecNumber>
    </recommendedName>
</protein>
<organism>
    <name type="scientific">Pseudomonas fluorescens (strain ATCC BAA-477 / NRRL B-23932 / Pf-5)</name>
    <dbReference type="NCBI Taxonomy" id="220664"/>
    <lineage>
        <taxon>Bacteria</taxon>
        <taxon>Pseudomonadati</taxon>
        <taxon>Pseudomonadota</taxon>
        <taxon>Gammaproteobacteria</taxon>
        <taxon>Pseudomonadales</taxon>
        <taxon>Pseudomonadaceae</taxon>
        <taxon>Pseudomonas</taxon>
    </lineage>
</organism>
<proteinExistence type="inferred from homology"/>
<reference key="1">
    <citation type="journal article" date="2005" name="Nat. Biotechnol.">
        <title>Complete genome sequence of the plant commensal Pseudomonas fluorescens Pf-5.</title>
        <authorList>
            <person name="Paulsen I.T."/>
            <person name="Press C.M."/>
            <person name="Ravel J."/>
            <person name="Kobayashi D.Y."/>
            <person name="Myers G.S.A."/>
            <person name="Mavrodi D.V."/>
            <person name="DeBoy R.T."/>
            <person name="Seshadri R."/>
            <person name="Ren Q."/>
            <person name="Madupu R."/>
            <person name="Dodson R.J."/>
            <person name="Durkin A.S."/>
            <person name="Brinkac L.M."/>
            <person name="Daugherty S.C."/>
            <person name="Sullivan S.A."/>
            <person name="Rosovitz M.J."/>
            <person name="Gwinn M.L."/>
            <person name="Zhou L."/>
            <person name="Schneider D.J."/>
            <person name="Cartinhour S.W."/>
            <person name="Nelson W.C."/>
            <person name="Weidman J."/>
            <person name="Watkins K."/>
            <person name="Tran K."/>
            <person name="Khouri H."/>
            <person name="Pierson E.A."/>
            <person name="Pierson L.S. III"/>
            <person name="Thomashow L.S."/>
            <person name="Loper J.E."/>
        </authorList>
    </citation>
    <scope>NUCLEOTIDE SEQUENCE [LARGE SCALE GENOMIC DNA]</scope>
    <source>
        <strain>ATCC BAA-477 / NRRL B-23932 / Pf-5</strain>
    </source>
</reference>
<sequence length="290" mass="31264">MKRTPHLLAIQSHVVFGHAGNSAAVFPMQRVGVNVWPLNTVQFSNHTQYGQWAGEVLAPQQIPELVEGIAAIGELGNCDAVLSGYLGSAAQGRAILSGVARIKAVNPKALYLCDPVMGHPEKGCSVPAEVSDFLLDEAVAMADFLCPNQLELDSFCGRKPQSLFDCLGMARSLLDKGPRAVLVKHLDYPGKLVDGFEMLLVTADGSWHLRRPLLAFPRQPVGVGDLTSGLFLARVLLGDSLVAAFEFTAAAVHEVLLETQACASYELELVRAQDRIAHPRVRFEATPIGF</sequence>
<feature type="chain" id="PRO_0000269819" description="Pyridoxal kinase PdxY">
    <location>
        <begin position="1"/>
        <end position="290"/>
    </location>
</feature>
<feature type="binding site" evidence="1">
    <location>
        <position position="12"/>
    </location>
    <ligand>
        <name>substrate</name>
    </ligand>
</feature>
<feature type="binding site" evidence="1">
    <location>
        <begin position="47"/>
        <end position="48"/>
    </location>
    <ligand>
        <name>substrate</name>
    </ligand>
</feature>
<feature type="binding site" evidence="1">
    <location>
        <position position="114"/>
    </location>
    <ligand>
        <name>ATP</name>
        <dbReference type="ChEBI" id="CHEBI:30616"/>
    </ligand>
</feature>
<feature type="binding site" evidence="1">
    <location>
        <position position="151"/>
    </location>
    <ligand>
        <name>ATP</name>
        <dbReference type="ChEBI" id="CHEBI:30616"/>
    </ligand>
</feature>
<feature type="binding site" evidence="1">
    <location>
        <position position="184"/>
    </location>
    <ligand>
        <name>ATP</name>
        <dbReference type="ChEBI" id="CHEBI:30616"/>
    </ligand>
</feature>
<feature type="binding site" evidence="1">
    <location>
        <begin position="211"/>
        <end position="214"/>
    </location>
    <ligand>
        <name>ATP</name>
        <dbReference type="ChEBI" id="CHEBI:30616"/>
    </ligand>
</feature>
<feature type="binding site" evidence="1">
    <location>
        <position position="225"/>
    </location>
    <ligand>
        <name>substrate</name>
    </ligand>
</feature>
<gene>
    <name evidence="1" type="primary">pdxY</name>
    <name type="ordered locus">PFL_6169</name>
</gene>
<accession>Q4K3F6</accession>
<comment type="function">
    <text evidence="1">Pyridoxal kinase involved in the salvage pathway of pyridoxal 5'-phosphate (PLP). Catalyzes the phosphorylation of pyridoxal to PLP.</text>
</comment>
<comment type="catalytic activity">
    <reaction evidence="1">
        <text>pyridoxal + ATP = pyridoxal 5'-phosphate + ADP + H(+)</text>
        <dbReference type="Rhea" id="RHEA:10224"/>
        <dbReference type="ChEBI" id="CHEBI:15378"/>
        <dbReference type="ChEBI" id="CHEBI:17310"/>
        <dbReference type="ChEBI" id="CHEBI:30616"/>
        <dbReference type="ChEBI" id="CHEBI:456216"/>
        <dbReference type="ChEBI" id="CHEBI:597326"/>
        <dbReference type="EC" id="2.7.1.35"/>
    </reaction>
</comment>
<comment type="cofactor">
    <cofactor evidence="1">
        <name>Mg(2+)</name>
        <dbReference type="ChEBI" id="CHEBI:18420"/>
    </cofactor>
</comment>
<comment type="pathway">
    <text evidence="1">Cofactor metabolism; pyridoxal 5'-phosphate salvage; pyridoxal 5'-phosphate from pyridoxal: step 1/1.</text>
</comment>
<comment type="subunit">
    <text evidence="1">Homodimer.</text>
</comment>
<comment type="similarity">
    <text evidence="1">Belongs to the pyridoxine kinase family. PdxY subfamily.</text>
</comment>